<feature type="signal peptide" evidence="2">
    <location>
        <begin position="1"/>
        <end position="23"/>
    </location>
</feature>
<feature type="chain" id="PRO_0000030961" description="Ribonuclease I">
    <location>
        <begin position="24"/>
        <end position="268"/>
    </location>
</feature>
<feature type="active site" evidence="1">
    <location>
        <position position="78"/>
    </location>
</feature>
<feature type="active site" evidence="1">
    <location>
        <position position="152"/>
    </location>
</feature>
<feature type="active site" evidence="1">
    <location>
        <position position="156"/>
    </location>
</feature>
<feature type="disulfide bond" evidence="1">
    <location>
        <begin position="103"/>
        <end position="159"/>
    </location>
</feature>
<feature type="strand" evidence="4">
    <location>
        <begin position="29"/>
        <end position="31"/>
    </location>
</feature>
<feature type="strand" evidence="4">
    <location>
        <begin position="36"/>
        <end position="43"/>
    </location>
</feature>
<feature type="helix" evidence="4">
    <location>
        <begin position="44"/>
        <end position="53"/>
    </location>
</feature>
<feature type="helix" evidence="4">
    <location>
        <begin position="60"/>
        <end position="63"/>
    </location>
</feature>
<feature type="helix" evidence="4">
    <location>
        <begin position="71"/>
        <end position="74"/>
    </location>
</feature>
<feature type="strand" evidence="4">
    <location>
        <begin position="75"/>
        <end position="82"/>
    </location>
</feature>
<feature type="helix" evidence="4">
    <location>
        <begin position="86"/>
        <end position="89"/>
    </location>
</feature>
<feature type="turn" evidence="4">
    <location>
        <begin position="90"/>
        <end position="92"/>
    </location>
</feature>
<feature type="helix" evidence="4">
    <location>
        <begin position="95"/>
        <end position="101"/>
    </location>
</feature>
<feature type="helix" evidence="4">
    <location>
        <begin position="102"/>
        <end position="104"/>
    </location>
</feature>
<feature type="turn" evidence="4">
    <location>
        <begin position="106"/>
        <end position="109"/>
    </location>
</feature>
<feature type="helix" evidence="4">
    <location>
        <begin position="116"/>
        <end position="121"/>
    </location>
</feature>
<feature type="helix" evidence="4">
    <location>
        <begin position="129"/>
        <end position="138"/>
    </location>
</feature>
<feature type="turn" evidence="4">
    <location>
        <begin position="144"/>
        <end position="146"/>
    </location>
</feature>
<feature type="helix" evidence="4">
    <location>
        <begin position="148"/>
        <end position="156"/>
    </location>
</feature>
<feature type="helix" evidence="4">
    <location>
        <begin position="158"/>
        <end position="160"/>
    </location>
</feature>
<feature type="helix" evidence="4">
    <location>
        <begin position="164"/>
        <end position="180"/>
    </location>
</feature>
<feature type="helix" evidence="4">
    <location>
        <begin position="182"/>
        <end position="189"/>
    </location>
</feature>
<feature type="turn" evidence="4">
    <location>
        <begin position="190"/>
        <end position="192"/>
    </location>
</feature>
<feature type="strand" evidence="4">
    <location>
        <begin position="193"/>
        <end position="196"/>
    </location>
</feature>
<feature type="helix" evidence="4">
    <location>
        <begin position="197"/>
        <end position="208"/>
    </location>
</feature>
<feature type="helix" evidence="4">
    <location>
        <begin position="210"/>
        <end position="215"/>
    </location>
</feature>
<feature type="strand" evidence="4">
    <location>
        <begin position="216"/>
        <end position="221"/>
    </location>
</feature>
<feature type="turn" evidence="4">
    <location>
        <begin position="222"/>
        <end position="225"/>
    </location>
</feature>
<feature type="strand" evidence="4">
    <location>
        <begin position="226"/>
        <end position="235"/>
    </location>
</feature>
<feature type="helix" evidence="4">
    <location>
        <begin position="236"/>
        <end position="238"/>
    </location>
</feature>
<feature type="strand" evidence="5">
    <location>
        <begin position="255"/>
        <end position="257"/>
    </location>
</feature>
<feature type="strand" evidence="4">
    <location>
        <begin position="259"/>
        <end position="262"/>
    </location>
</feature>
<name>RNI_ECOLI</name>
<gene>
    <name type="primary">rna</name>
    <name type="synonym">rnsA</name>
    <name type="ordered locus">b0611</name>
    <name type="ordered locus">JW0603</name>
</gene>
<evidence type="ECO:0000250" key="1"/>
<evidence type="ECO:0000269" key="2">
    <source>
    </source>
</evidence>
<evidence type="ECO:0000305" key="3"/>
<evidence type="ECO:0007829" key="4">
    <source>
        <dbReference type="PDB" id="2PQX"/>
    </source>
</evidence>
<evidence type="ECO:0007829" key="5">
    <source>
        <dbReference type="PDB" id="2PQY"/>
    </source>
</evidence>
<keyword id="KW-0002">3D-structure</keyword>
<keyword id="KW-0963">Cytoplasm</keyword>
<keyword id="KW-0903">Direct protein sequencing</keyword>
<keyword id="KW-1015">Disulfide bond</keyword>
<keyword id="KW-0255">Endonuclease</keyword>
<keyword id="KW-0378">Hydrolase</keyword>
<keyword id="KW-0456">Lyase</keyword>
<keyword id="KW-0540">Nuclease</keyword>
<keyword id="KW-0574">Periplasm</keyword>
<keyword id="KW-1185">Reference proteome</keyword>
<keyword id="KW-0732">Signal</keyword>
<accession>P21338</accession>
<accession>P77101</accession>
<reference key="1">
    <citation type="journal article" date="1990" name="Gene">
        <title>Cloning and sequencing the gene encoding Escherichia coli ribonuclease I: exact physical mapping using the genome library.</title>
        <authorList>
            <person name="Meador J. III"/>
            <person name="Kennell D."/>
        </authorList>
    </citation>
    <scope>NUCLEOTIDE SEQUENCE [GENOMIC DNA]</scope>
    <scope>PROTEIN SEQUENCE OF 24-63</scope>
    <source>
        <strain>K12</strain>
    </source>
</reference>
<reference key="2">
    <citation type="journal article" date="1996" name="DNA Res.">
        <title>A 718-kb DNA sequence of the Escherichia coli K-12 genome corresponding to the 12.7-28.0 min region on the linkage map.</title>
        <authorList>
            <person name="Oshima T."/>
            <person name="Aiba H."/>
            <person name="Baba T."/>
            <person name="Fujita K."/>
            <person name="Hayashi K."/>
            <person name="Honjo A."/>
            <person name="Ikemoto K."/>
            <person name="Inada T."/>
            <person name="Itoh T."/>
            <person name="Kajihara M."/>
            <person name="Kanai K."/>
            <person name="Kashimoto K."/>
            <person name="Kimura S."/>
            <person name="Kitagawa M."/>
            <person name="Makino K."/>
            <person name="Masuda S."/>
            <person name="Miki T."/>
            <person name="Mizobuchi K."/>
            <person name="Mori H."/>
            <person name="Motomura K."/>
            <person name="Nakamura Y."/>
            <person name="Nashimoto H."/>
            <person name="Nishio Y."/>
            <person name="Saito N."/>
            <person name="Sampei G."/>
            <person name="Seki Y."/>
            <person name="Tagami H."/>
            <person name="Takemoto K."/>
            <person name="Wada C."/>
            <person name="Yamamoto Y."/>
            <person name="Yano M."/>
            <person name="Horiuchi T."/>
        </authorList>
    </citation>
    <scope>NUCLEOTIDE SEQUENCE [LARGE SCALE GENOMIC DNA]</scope>
    <source>
        <strain>K12 / W3110 / ATCC 27325 / DSM 5911</strain>
    </source>
</reference>
<reference key="3">
    <citation type="submission" date="1997-01" db="EMBL/GenBank/DDBJ databases">
        <title>Sequence of minutes 4-25 of Escherichia coli.</title>
        <authorList>
            <person name="Chung E."/>
            <person name="Allen E."/>
            <person name="Araujo R."/>
            <person name="Aparicio A.M."/>
            <person name="Davis K."/>
            <person name="Duncan M."/>
            <person name="Federspiel N."/>
            <person name="Hyman R."/>
            <person name="Kalman S."/>
            <person name="Komp C."/>
            <person name="Kurdi O."/>
            <person name="Lew H."/>
            <person name="Lin D."/>
            <person name="Namath A."/>
            <person name="Oefner P."/>
            <person name="Roberts D."/>
            <person name="Schramm S."/>
            <person name="Davis R.W."/>
        </authorList>
    </citation>
    <scope>NUCLEOTIDE SEQUENCE [LARGE SCALE GENOMIC DNA]</scope>
    <source>
        <strain>K12 / MG1655 / ATCC 47076</strain>
    </source>
</reference>
<reference key="4">
    <citation type="journal article" date="1997" name="Science">
        <title>The complete genome sequence of Escherichia coli K-12.</title>
        <authorList>
            <person name="Blattner F.R."/>
            <person name="Plunkett G. III"/>
            <person name="Bloch C.A."/>
            <person name="Perna N.T."/>
            <person name="Burland V."/>
            <person name="Riley M."/>
            <person name="Collado-Vides J."/>
            <person name="Glasner J.D."/>
            <person name="Rode C.K."/>
            <person name="Mayhew G.F."/>
            <person name="Gregor J."/>
            <person name="Davis N.W."/>
            <person name="Kirkpatrick H.A."/>
            <person name="Goeden M.A."/>
            <person name="Rose D.J."/>
            <person name="Mau B."/>
            <person name="Shao Y."/>
        </authorList>
    </citation>
    <scope>NUCLEOTIDE SEQUENCE [LARGE SCALE GENOMIC DNA]</scope>
    <source>
        <strain>K12 / MG1655 / ATCC 47076</strain>
    </source>
</reference>
<reference key="5">
    <citation type="journal article" date="2006" name="Mol. Syst. Biol.">
        <title>Highly accurate genome sequences of Escherichia coli K-12 strains MG1655 and W3110.</title>
        <authorList>
            <person name="Hayashi K."/>
            <person name="Morooka N."/>
            <person name="Yamamoto Y."/>
            <person name="Fujita K."/>
            <person name="Isono K."/>
            <person name="Choi S."/>
            <person name="Ohtsubo E."/>
            <person name="Baba T."/>
            <person name="Wanner B.L."/>
            <person name="Mori H."/>
            <person name="Horiuchi T."/>
        </authorList>
    </citation>
    <scope>NUCLEOTIDE SEQUENCE [LARGE SCALE GENOMIC DNA]</scope>
    <source>
        <strain>K12 / W3110 / ATCC 27325 / DSM 5911</strain>
    </source>
</reference>
<reference key="6">
    <citation type="journal article" date="1994" name="Genomics">
        <title>Protein family classification based on searching a database of blocks.</title>
        <authorList>
            <person name="Henikoff S."/>
            <person name="Henikoff J.G."/>
        </authorList>
    </citation>
    <scope>SIMILARITY TO FUNGAL RIBONUCLEASES</scope>
</reference>
<sequence length="268" mass="29618">MKAFWRNAALLAVSLLPFSSANALALQAKQYGDFDRYVLALSWQTGFCQSQHDRNRNERDECRLQTETTNKADFLTVHGLWPGLPKSVAARGVDERRWMRFGCATRPIPNLPEARASRMCSSPETGLSLETAAKLSEVMPGAGGRSCLERYEYAKHGACFGFDPDAYFGTMVRLNQEIKESEAGKFLADNYGKTVSRRDFDAAFAKSWGKENVKAVKLTCQGNPAYLTEIQISIKADAINAPLSANSFLPQPHPGNCGKTFVIDKAGY</sequence>
<comment type="function">
    <text>One of the few RNases that cleaves the phosphodiester bond between any two nucleotide. Shows a preference for cytidylic or guanylic acid.</text>
</comment>
<comment type="catalytic activity">
    <reaction>
        <text>RNA containing adenosine-cytidine + H2O = an [RNA fragment]-3'-cytidine-3'-phosphate + a 5'-a hydroxy-adenosine -3'-[RNA fragment].</text>
        <dbReference type="EC" id="4.6.1.21"/>
    </reaction>
</comment>
<comment type="subunit">
    <text>Monomer.</text>
</comment>
<comment type="subcellular location">
    <subcellularLocation>
        <location>Periplasm</location>
    </subcellularLocation>
    <subcellularLocation>
        <location>Cytoplasm</location>
    </subcellularLocation>
    <text>RNase I (periplasmic) and RNase I* (cytoplasmic) appear to be isoforms apparently encoded by the same gene. The cytoplasmic form is less active towards natural polymer RNA.</text>
</comment>
<comment type="PTM">
    <text evidence="1">Contains four disulfide bonds.</text>
</comment>
<comment type="similarity">
    <text evidence="3">Belongs to the RNase T2 family.</text>
</comment>
<comment type="sequence caution" evidence="3">
    <conflict type="erroneous initiation">
        <sequence resource="EMBL-CDS" id="AAB40811"/>
    </conflict>
</comment>
<proteinExistence type="evidence at protein level"/>
<protein>
    <recommendedName>
        <fullName>Ribonuclease I</fullName>
        <shortName>RNase I</shortName>
        <ecNumber>4.6.1.21</ecNumber>
    </recommendedName>
    <alternativeName>
        <fullName>Enterobacter ribonuclease</fullName>
    </alternativeName>
</protein>
<organism>
    <name type="scientific">Escherichia coli (strain K12)</name>
    <dbReference type="NCBI Taxonomy" id="83333"/>
    <lineage>
        <taxon>Bacteria</taxon>
        <taxon>Pseudomonadati</taxon>
        <taxon>Pseudomonadota</taxon>
        <taxon>Gammaproteobacteria</taxon>
        <taxon>Enterobacterales</taxon>
        <taxon>Enterobacteriaceae</taxon>
        <taxon>Escherichia</taxon>
    </lineage>
</organism>
<dbReference type="EC" id="4.6.1.21"/>
<dbReference type="EMBL" id="M55687">
    <property type="protein sequence ID" value="AAA24548.1"/>
    <property type="molecule type" value="Genomic_DNA"/>
</dbReference>
<dbReference type="EMBL" id="U82598">
    <property type="protein sequence ID" value="AAB40811.1"/>
    <property type="status" value="ALT_INIT"/>
    <property type="molecule type" value="Genomic_DNA"/>
</dbReference>
<dbReference type="EMBL" id="U00096">
    <property type="protein sequence ID" value="AAC73712.1"/>
    <property type="molecule type" value="Genomic_DNA"/>
</dbReference>
<dbReference type="EMBL" id="AP009048">
    <property type="protein sequence ID" value="BAA35240.1"/>
    <property type="molecule type" value="Genomic_DNA"/>
</dbReference>
<dbReference type="PIR" id="JQ0777">
    <property type="entry name" value="JQ0777"/>
</dbReference>
<dbReference type="RefSeq" id="NP_415144.1">
    <property type="nucleotide sequence ID" value="NC_000913.3"/>
</dbReference>
<dbReference type="RefSeq" id="WP_000643397.1">
    <property type="nucleotide sequence ID" value="NZ_SSZK01000032.1"/>
</dbReference>
<dbReference type="PDB" id="2EA1">
    <property type="method" value="X-ray"/>
    <property type="resolution" value="1.80 A"/>
    <property type="chains" value="A=24-268"/>
</dbReference>
<dbReference type="PDB" id="2PQX">
    <property type="method" value="X-ray"/>
    <property type="resolution" value="1.42 A"/>
    <property type="chains" value="A=24-268"/>
</dbReference>
<dbReference type="PDB" id="2PQY">
    <property type="method" value="X-ray"/>
    <property type="resolution" value="2.30 A"/>
    <property type="chains" value="A=24-268"/>
</dbReference>
<dbReference type="PDB" id="2Z70">
    <property type="method" value="X-ray"/>
    <property type="resolution" value="1.70 A"/>
    <property type="chains" value="A=24-268"/>
</dbReference>
<dbReference type="PDBsum" id="2EA1"/>
<dbReference type="PDBsum" id="2PQX"/>
<dbReference type="PDBsum" id="2PQY"/>
<dbReference type="PDBsum" id="2Z70"/>
<dbReference type="SMR" id="P21338"/>
<dbReference type="BioGRID" id="4259901">
    <property type="interactions" value="36"/>
</dbReference>
<dbReference type="FunCoup" id="P21338">
    <property type="interactions" value="5"/>
</dbReference>
<dbReference type="IntAct" id="P21338">
    <property type="interactions" value="1"/>
</dbReference>
<dbReference type="STRING" id="511145.b0611"/>
<dbReference type="jPOST" id="P21338"/>
<dbReference type="PaxDb" id="511145-b0611"/>
<dbReference type="EnsemblBacteria" id="AAC73712">
    <property type="protein sequence ID" value="AAC73712"/>
    <property type="gene ID" value="b0611"/>
</dbReference>
<dbReference type="GeneID" id="949065"/>
<dbReference type="KEGG" id="ecj:JW0603"/>
<dbReference type="KEGG" id="eco:b0611"/>
<dbReference type="KEGG" id="ecoc:C3026_03055"/>
<dbReference type="PATRIC" id="fig|1411691.4.peg.1657"/>
<dbReference type="EchoBASE" id="EB0849"/>
<dbReference type="eggNOG" id="COG3719">
    <property type="taxonomic scope" value="Bacteria"/>
</dbReference>
<dbReference type="HOGENOM" id="CLU_066430_1_0_6"/>
<dbReference type="InParanoid" id="P21338"/>
<dbReference type="OMA" id="GLWPMRQ"/>
<dbReference type="OrthoDB" id="4720638at2"/>
<dbReference type="PhylomeDB" id="P21338"/>
<dbReference type="BioCyc" id="EcoCyc:EG10856-MONOMER"/>
<dbReference type="BioCyc" id="MetaCyc:EG10856-MONOMER"/>
<dbReference type="BRENDA" id="4.6.1.18">
    <property type="organism ID" value="2026"/>
</dbReference>
<dbReference type="EvolutionaryTrace" id="P21338"/>
<dbReference type="PRO" id="PR:P21338"/>
<dbReference type="Proteomes" id="UP000000625">
    <property type="component" value="Chromosome"/>
</dbReference>
<dbReference type="GO" id="GO:0005737">
    <property type="term" value="C:cytoplasm"/>
    <property type="evidence" value="ECO:0007669"/>
    <property type="project" value="UniProtKB-SubCell"/>
</dbReference>
<dbReference type="GO" id="GO:0030288">
    <property type="term" value="C:outer membrane-bounded periplasmic space"/>
    <property type="evidence" value="ECO:0000314"/>
    <property type="project" value="EcoCyc"/>
</dbReference>
<dbReference type="GO" id="GO:0008847">
    <property type="term" value="F:Enterobacter ribonuclease activity"/>
    <property type="evidence" value="ECO:0007669"/>
    <property type="project" value="UniProtKB-EC"/>
</dbReference>
<dbReference type="GO" id="GO:0033897">
    <property type="term" value="F:ribonuclease T2 activity"/>
    <property type="evidence" value="ECO:0007669"/>
    <property type="project" value="InterPro"/>
</dbReference>
<dbReference type="GO" id="GO:0003723">
    <property type="term" value="F:RNA binding"/>
    <property type="evidence" value="ECO:0007669"/>
    <property type="project" value="InterPro"/>
</dbReference>
<dbReference type="GO" id="GO:0006401">
    <property type="term" value="P:RNA catabolic process"/>
    <property type="evidence" value="ECO:0000315"/>
    <property type="project" value="EcoCyc"/>
</dbReference>
<dbReference type="CDD" id="cd01062">
    <property type="entry name" value="RNase_T2_prok"/>
    <property type="match status" value="1"/>
</dbReference>
<dbReference type="FunFam" id="3.90.730.10:FF:000002">
    <property type="entry name" value="Ribonuclease I"/>
    <property type="match status" value="1"/>
</dbReference>
<dbReference type="Gene3D" id="3.90.730.10">
    <property type="entry name" value="Ribonuclease T2-like"/>
    <property type="match status" value="1"/>
</dbReference>
<dbReference type="InterPro" id="IPR001568">
    <property type="entry name" value="RNase_T2-like"/>
</dbReference>
<dbReference type="InterPro" id="IPR036430">
    <property type="entry name" value="RNase_T2-like_sf"/>
</dbReference>
<dbReference type="InterPro" id="IPR018188">
    <property type="entry name" value="RNase_T2_His_AS_1"/>
</dbReference>
<dbReference type="InterPro" id="IPR033130">
    <property type="entry name" value="RNase_T2_His_AS_2"/>
</dbReference>
<dbReference type="InterPro" id="IPR039378">
    <property type="entry name" value="RNase_T2_prok"/>
</dbReference>
<dbReference type="NCBIfam" id="NF007502">
    <property type="entry name" value="PRK10095.1"/>
    <property type="match status" value="1"/>
</dbReference>
<dbReference type="PANTHER" id="PTHR11240">
    <property type="entry name" value="RIBONUCLEASE T2"/>
    <property type="match status" value="1"/>
</dbReference>
<dbReference type="PANTHER" id="PTHR11240:SF22">
    <property type="entry name" value="RIBONUCLEASE T2"/>
    <property type="match status" value="1"/>
</dbReference>
<dbReference type="Pfam" id="PF00445">
    <property type="entry name" value="Ribonuclease_T2"/>
    <property type="match status" value="1"/>
</dbReference>
<dbReference type="SUPFAM" id="SSF55895">
    <property type="entry name" value="Ribonuclease Rh-like"/>
    <property type="match status" value="1"/>
</dbReference>
<dbReference type="PROSITE" id="PS00530">
    <property type="entry name" value="RNASE_T2_1"/>
    <property type="match status" value="1"/>
</dbReference>
<dbReference type="PROSITE" id="PS00531">
    <property type="entry name" value="RNASE_T2_2"/>
    <property type="match status" value="1"/>
</dbReference>